<comment type="function">
    <text evidence="1">Catalyzes the attachment of proline to tRNA(Pro) in a two-step reaction: proline is first activated by ATP to form Pro-AMP and then transferred to the acceptor end of tRNA(Pro). As ProRS can inadvertently accommodate and process non-cognate amino acids such as alanine and cysteine, to avoid such errors it has two additional distinct editing activities against alanine. One activity is designated as 'pretransfer' editing and involves the tRNA(Pro)-independent hydrolysis of activated Ala-AMP. The other activity is designated 'posttransfer' editing and involves deacylation of mischarged Ala-tRNA(Pro). The misacylated Cys-tRNA(Pro) is not edited by ProRS.</text>
</comment>
<comment type="catalytic activity">
    <reaction evidence="1">
        <text>tRNA(Pro) + L-proline + ATP = L-prolyl-tRNA(Pro) + AMP + diphosphate</text>
        <dbReference type="Rhea" id="RHEA:14305"/>
        <dbReference type="Rhea" id="RHEA-COMP:9700"/>
        <dbReference type="Rhea" id="RHEA-COMP:9702"/>
        <dbReference type="ChEBI" id="CHEBI:30616"/>
        <dbReference type="ChEBI" id="CHEBI:33019"/>
        <dbReference type="ChEBI" id="CHEBI:60039"/>
        <dbReference type="ChEBI" id="CHEBI:78442"/>
        <dbReference type="ChEBI" id="CHEBI:78532"/>
        <dbReference type="ChEBI" id="CHEBI:456215"/>
        <dbReference type="EC" id="6.1.1.15"/>
    </reaction>
</comment>
<comment type="subunit">
    <text evidence="1">Homodimer.</text>
</comment>
<comment type="subcellular location">
    <subcellularLocation>
        <location evidence="1">Cytoplasm</location>
    </subcellularLocation>
</comment>
<comment type="domain">
    <text evidence="1">Consists of three domains: the N-terminal catalytic domain, the editing domain and the C-terminal anticodon-binding domain.</text>
</comment>
<comment type="similarity">
    <text evidence="1">Belongs to the class-II aminoacyl-tRNA synthetase family. ProS type 1 subfamily.</text>
</comment>
<dbReference type="EC" id="6.1.1.15" evidence="1"/>
<dbReference type="EMBL" id="CP000546">
    <property type="protein sequence ID" value="ABN03929.1"/>
    <property type="molecule type" value="Genomic_DNA"/>
</dbReference>
<dbReference type="RefSeq" id="WP_004194217.1">
    <property type="nucleotide sequence ID" value="NC_008836.1"/>
</dbReference>
<dbReference type="SMR" id="A2S5R3"/>
<dbReference type="KEGG" id="bml:BMA10229_A1298"/>
<dbReference type="HOGENOM" id="CLU_016739_0_0_4"/>
<dbReference type="Proteomes" id="UP000002283">
    <property type="component" value="Chromosome I"/>
</dbReference>
<dbReference type="GO" id="GO:0005829">
    <property type="term" value="C:cytosol"/>
    <property type="evidence" value="ECO:0007669"/>
    <property type="project" value="TreeGrafter"/>
</dbReference>
<dbReference type="GO" id="GO:0002161">
    <property type="term" value="F:aminoacyl-tRNA deacylase activity"/>
    <property type="evidence" value="ECO:0007669"/>
    <property type="project" value="InterPro"/>
</dbReference>
<dbReference type="GO" id="GO:0005524">
    <property type="term" value="F:ATP binding"/>
    <property type="evidence" value="ECO:0007669"/>
    <property type="project" value="UniProtKB-UniRule"/>
</dbReference>
<dbReference type="GO" id="GO:0004827">
    <property type="term" value="F:proline-tRNA ligase activity"/>
    <property type="evidence" value="ECO:0007669"/>
    <property type="project" value="UniProtKB-UniRule"/>
</dbReference>
<dbReference type="GO" id="GO:0006433">
    <property type="term" value="P:prolyl-tRNA aminoacylation"/>
    <property type="evidence" value="ECO:0007669"/>
    <property type="project" value="UniProtKB-UniRule"/>
</dbReference>
<dbReference type="CDD" id="cd04334">
    <property type="entry name" value="ProRS-INS"/>
    <property type="match status" value="1"/>
</dbReference>
<dbReference type="CDD" id="cd00861">
    <property type="entry name" value="ProRS_anticodon_short"/>
    <property type="match status" value="1"/>
</dbReference>
<dbReference type="CDD" id="cd00779">
    <property type="entry name" value="ProRS_core_prok"/>
    <property type="match status" value="1"/>
</dbReference>
<dbReference type="FunFam" id="3.30.930.10:FF:000043">
    <property type="entry name" value="Proline--tRNA ligase"/>
    <property type="match status" value="1"/>
</dbReference>
<dbReference type="FunFam" id="3.30.930.10:FF:000097">
    <property type="entry name" value="Proline--tRNA ligase"/>
    <property type="match status" value="1"/>
</dbReference>
<dbReference type="Gene3D" id="3.40.50.800">
    <property type="entry name" value="Anticodon-binding domain"/>
    <property type="match status" value="1"/>
</dbReference>
<dbReference type="Gene3D" id="3.30.930.10">
    <property type="entry name" value="Bira Bifunctional Protein, Domain 2"/>
    <property type="match status" value="2"/>
</dbReference>
<dbReference type="Gene3D" id="3.90.960.10">
    <property type="entry name" value="YbaK/aminoacyl-tRNA synthetase-associated domain"/>
    <property type="match status" value="1"/>
</dbReference>
<dbReference type="HAMAP" id="MF_01569">
    <property type="entry name" value="Pro_tRNA_synth_type1"/>
    <property type="match status" value="1"/>
</dbReference>
<dbReference type="InterPro" id="IPR002314">
    <property type="entry name" value="aa-tRNA-synt_IIb"/>
</dbReference>
<dbReference type="InterPro" id="IPR006195">
    <property type="entry name" value="aa-tRNA-synth_II"/>
</dbReference>
<dbReference type="InterPro" id="IPR045864">
    <property type="entry name" value="aa-tRNA-synth_II/BPL/LPL"/>
</dbReference>
<dbReference type="InterPro" id="IPR004154">
    <property type="entry name" value="Anticodon-bd"/>
</dbReference>
<dbReference type="InterPro" id="IPR036621">
    <property type="entry name" value="Anticodon-bd_dom_sf"/>
</dbReference>
<dbReference type="InterPro" id="IPR002316">
    <property type="entry name" value="Pro-tRNA-ligase_IIa"/>
</dbReference>
<dbReference type="InterPro" id="IPR004500">
    <property type="entry name" value="Pro-tRNA-synth_IIa_bac-type"/>
</dbReference>
<dbReference type="InterPro" id="IPR023717">
    <property type="entry name" value="Pro-tRNA-Synthase_IIa_type1"/>
</dbReference>
<dbReference type="InterPro" id="IPR050062">
    <property type="entry name" value="Pro-tRNA_synthetase"/>
</dbReference>
<dbReference type="InterPro" id="IPR044140">
    <property type="entry name" value="ProRS_anticodon_short"/>
</dbReference>
<dbReference type="InterPro" id="IPR033730">
    <property type="entry name" value="ProRS_core_prok"/>
</dbReference>
<dbReference type="InterPro" id="IPR036754">
    <property type="entry name" value="YbaK/aa-tRNA-synt-asso_dom_sf"/>
</dbReference>
<dbReference type="InterPro" id="IPR007214">
    <property type="entry name" value="YbaK/aa-tRNA-synth-assoc-dom"/>
</dbReference>
<dbReference type="NCBIfam" id="NF006625">
    <property type="entry name" value="PRK09194.1"/>
    <property type="match status" value="1"/>
</dbReference>
<dbReference type="NCBIfam" id="TIGR00409">
    <property type="entry name" value="proS_fam_II"/>
    <property type="match status" value="1"/>
</dbReference>
<dbReference type="PANTHER" id="PTHR42753">
    <property type="entry name" value="MITOCHONDRIAL RIBOSOME PROTEIN L39/PROLYL-TRNA LIGASE FAMILY MEMBER"/>
    <property type="match status" value="1"/>
</dbReference>
<dbReference type="PANTHER" id="PTHR42753:SF2">
    <property type="entry name" value="PROLINE--TRNA LIGASE"/>
    <property type="match status" value="1"/>
</dbReference>
<dbReference type="Pfam" id="PF03129">
    <property type="entry name" value="HGTP_anticodon"/>
    <property type="match status" value="1"/>
</dbReference>
<dbReference type="Pfam" id="PF00587">
    <property type="entry name" value="tRNA-synt_2b"/>
    <property type="match status" value="1"/>
</dbReference>
<dbReference type="Pfam" id="PF04073">
    <property type="entry name" value="tRNA_edit"/>
    <property type="match status" value="1"/>
</dbReference>
<dbReference type="PIRSF" id="PIRSF001535">
    <property type="entry name" value="ProRS_1"/>
    <property type="match status" value="1"/>
</dbReference>
<dbReference type="PRINTS" id="PR01046">
    <property type="entry name" value="TRNASYNTHPRO"/>
</dbReference>
<dbReference type="SUPFAM" id="SSF52954">
    <property type="entry name" value="Class II aaRS ABD-related"/>
    <property type="match status" value="1"/>
</dbReference>
<dbReference type="SUPFAM" id="SSF55681">
    <property type="entry name" value="Class II aaRS and biotin synthetases"/>
    <property type="match status" value="1"/>
</dbReference>
<dbReference type="SUPFAM" id="SSF55826">
    <property type="entry name" value="YbaK/ProRS associated domain"/>
    <property type="match status" value="1"/>
</dbReference>
<dbReference type="PROSITE" id="PS50862">
    <property type="entry name" value="AA_TRNA_LIGASE_II"/>
    <property type="match status" value="1"/>
</dbReference>
<keyword id="KW-0030">Aminoacyl-tRNA synthetase</keyword>
<keyword id="KW-0067">ATP-binding</keyword>
<keyword id="KW-0963">Cytoplasm</keyword>
<keyword id="KW-0436">Ligase</keyword>
<keyword id="KW-0547">Nucleotide-binding</keyword>
<keyword id="KW-0648">Protein biosynthesis</keyword>
<evidence type="ECO:0000255" key="1">
    <source>
        <dbReference type="HAMAP-Rule" id="MF_01569"/>
    </source>
</evidence>
<proteinExistence type="inferred from homology"/>
<protein>
    <recommendedName>
        <fullName evidence="1">Proline--tRNA ligase</fullName>
        <ecNumber evidence="1">6.1.1.15</ecNumber>
    </recommendedName>
    <alternativeName>
        <fullName evidence="1">Prolyl-tRNA synthetase</fullName>
        <shortName evidence="1">ProRS</shortName>
    </alternativeName>
</protein>
<gene>
    <name evidence="1" type="primary">proS</name>
    <name type="ordered locus">BMA10229_A1298</name>
</gene>
<name>SYP_BURM9</name>
<reference key="1">
    <citation type="journal article" date="2010" name="Genome Biol. Evol.">
        <title>Continuing evolution of Burkholderia mallei through genome reduction and large-scale rearrangements.</title>
        <authorList>
            <person name="Losada L."/>
            <person name="Ronning C.M."/>
            <person name="DeShazer D."/>
            <person name="Woods D."/>
            <person name="Fedorova N."/>
            <person name="Kim H.S."/>
            <person name="Shabalina S.A."/>
            <person name="Pearson T.R."/>
            <person name="Brinkac L."/>
            <person name="Tan P."/>
            <person name="Nandi T."/>
            <person name="Crabtree J."/>
            <person name="Badger J."/>
            <person name="Beckstrom-Sternberg S."/>
            <person name="Saqib M."/>
            <person name="Schutzer S.E."/>
            <person name="Keim P."/>
            <person name="Nierman W.C."/>
        </authorList>
    </citation>
    <scope>NUCLEOTIDE SEQUENCE [LARGE SCALE GENOMIC DNA]</scope>
    <source>
        <strain>NCTC 10229</strain>
    </source>
</reference>
<organism>
    <name type="scientific">Burkholderia mallei (strain NCTC 10229)</name>
    <dbReference type="NCBI Taxonomy" id="412022"/>
    <lineage>
        <taxon>Bacteria</taxon>
        <taxon>Pseudomonadati</taxon>
        <taxon>Pseudomonadota</taxon>
        <taxon>Betaproteobacteria</taxon>
        <taxon>Burkholderiales</taxon>
        <taxon>Burkholderiaceae</taxon>
        <taxon>Burkholderia</taxon>
        <taxon>pseudomallei group</taxon>
    </lineage>
</organism>
<feature type="chain" id="PRO_1000069123" description="Proline--tRNA ligase">
    <location>
        <begin position="1"/>
        <end position="578"/>
    </location>
</feature>
<accession>A2S5R3</accession>
<sequence>MKASRFFIGTLKEAPADAEIVSHKLMVRAGMIRRVAGGIYNYLPVGLRSIRKVEAIVREEMNRAGAIELLMPAVQPAELWQESGRWEQYGPELLRFKDRKQNEFVIGPTHEEVVTDIARNQIKSYRQMPVNFYQIQTKFRDEIRPRFGVMRGREFIMKDAYSFDKDHESLKESYKKMYDAYVRIFTRIGLEFRPVAADNGSIGGSGSHEFHVIADTGEDAIAYCPTSDFAANVEAAEALPLLASRAAPAEAMQKVATPGKAKCEAVAELMGIPLERTIKSIVLATDNEGAEPTIWLLMLRGDHDLNEIKTAKLPGLAGHRFATEAEIVEWFGTPPGYLGPIGTKKPVRVVADRTVANMSDFVVGANEVDYHIAGVNWGRDLPEPVVADIRNVKAGDPSPDGKGALDICRGIEVGHVFQLGTKYSDAMGATFIDESGKAQPMVMGCYGIGITRILGAAIEQNFDDKGIVWPEAIAPFEVVLCPMGYDRSDAVREAADKLYADLAAAGIDVILDDRGERPGVMFADWELIGVPHRLVIGERGLKDGKIEYQGRRDAEATLLPADSAAAAVAEKVRAALAR</sequence>